<sequence>MKFIVKLQAEITIKSRPVRKRFTKILESSVKNVLRRIDEQVTTRMNWDNIEVNTKDNSPENRERLVEALKCIPGIPMFLEVQQSEFVDVHDIYEKTLAVHAESIENKTFCVRAKRTGNHDFNSLKVEQYVGGGLNQQVESAKVKLKNPDVTIHLEIKNKDLFIVTQRHKGLGGFPIATQEDVLSLMSGGFDSGVSSYQMIKKGARTHYCFFNLGGSAHEVGVKQISYYLWNKFGASHKVKFFAVDFEPVVAEILENVENSQMGVVLKRMMIRAATKIAERGKIQALVTGESLGQVSSQTLTNLNVINRVTDTLILRPLAAYDKQDIIDIARKIGTEEFSKTIPEYCGVISKKPTVKAVLSKVEEEEGNFDFDVLDKVVSETRVYDIRDIGKEAEEEIHAVDLVENIPENAVVVDIRSPEEEEDKPLELGDVEVKHIPFYKLSTQFGDLDMTKEYLLYCDHGVMSKLQALYLLDNGFKNVKVYRP</sequence>
<name>THII_COLP3</name>
<accession>Q487C7</accession>
<comment type="function">
    <text evidence="1">Catalyzes the ATP-dependent transfer of a sulfur to tRNA to produce 4-thiouridine in position 8 of tRNAs, which functions as a near-UV photosensor. Also catalyzes the transfer of sulfur to the sulfur carrier protein ThiS, forming ThiS-thiocarboxylate. This is a step in the synthesis of thiazole, in the thiamine biosynthesis pathway. The sulfur is donated as persulfide by IscS.</text>
</comment>
<comment type="catalytic activity">
    <reaction evidence="1">
        <text>[ThiI sulfur-carrier protein]-S-sulfanyl-L-cysteine + a uridine in tRNA + 2 reduced [2Fe-2S]-[ferredoxin] + ATP + H(+) = [ThiI sulfur-carrier protein]-L-cysteine + a 4-thiouridine in tRNA + 2 oxidized [2Fe-2S]-[ferredoxin] + AMP + diphosphate</text>
        <dbReference type="Rhea" id="RHEA:24176"/>
        <dbReference type="Rhea" id="RHEA-COMP:10000"/>
        <dbReference type="Rhea" id="RHEA-COMP:10001"/>
        <dbReference type="Rhea" id="RHEA-COMP:13337"/>
        <dbReference type="Rhea" id="RHEA-COMP:13338"/>
        <dbReference type="Rhea" id="RHEA-COMP:13339"/>
        <dbReference type="Rhea" id="RHEA-COMP:13340"/>
        <dbReference type="ChEBI" id="CHEBI:15378"/>
        <dbReference type="ChEBI" id="CHEBI:29950"/>
        <dbReference type="ChEBI" id="CHEBI:30616"/>
        <dbReference type="ChEBI" id="CHEBI:33019"/>
        <dbReference type="ChEBI" id="CHEBI:33737"/>
        <dbReference type="ChEBI" id="CHEBI:33738"/>
        <dbReference type="ChEBI" id="CHEBI:61963"/>
        <dbReference type="ChEBI" id="CHEBI:65315"/>
        <dbReference type="ChEBI" id="CHEBI:136798"/>
        <dbReference type="ChEBI" id="CHEBI:456215"/>
        <dbReference type="EC" id="2.8.1.4"/>
    </reaction>
</comment>
<comment type="catalytic activity">
    <reaction evidence="1">
        <text>[ThiS sulfur-carrier protein]-C-terminal Gly-Gly-AMP + S-sulfanyl-L-cysteinyl-[cysteine desulfurase] + AH2 = [ThiS sulfur-carrier protein]-C-terminal-Gly-aminoethanethioate + L-cysteinyl-[cysteine desulfurase] + A + AMP + 2 H(+)</text>
        <dbReference type="Rhea" id="RHEA:43340"/>
        <dbReference type="Rhea" id="RHEA-COMP:12157"/>
        <dbReference type="Rhea" id="RHEA-COMP:12158"/>
        <dbReference type="Rhea" id="RHEA-COMP:12910"/>
        <dbReference type="Rhea" id="RHEA-COMP:19908"/>
        <dbReference type="ChEBI" id="CHEBI:13193"/>
        <dbReference type="ChEBI" id="CHEBI:15378"/>
        <dbReference type="ChEBI" id="CHEBI:17499"/>
        <dbReference type="ChEBI" id="CHEBI:29950"/>
        <dbReference type="ChEBI" id="CHEBI:61963"/>
        <dbReference type="ChEBI" id="CHEBI:90618"/>
        <dbReference type="ChEBI" id="CHEBI:232372"/>
        <dbReference type="ChEBI" id="CHEBI:456215"/>
    </reaction>
</comment>
<comment type="pathway">
    <text evidence="1">Cofactor biosynthesis; thiamine diphosphate biosynthesis.</text>
</comment>
<comment type="subcellular location">
    <subcellularLocation>
        <location evidence="1">Cytoplasm</location>
    </subcellularLocation>
</comment>
<comment type="similarity">
    <text evidence="1">Belongs to the ThiI family.</text>
</comment>
<protein>
    <recommendedName>
        <fullName evidence="1">tRNA sulfurtransferase</fullName>
        <ecNumber evidence="1">2.8.1.4</ecNumber>
    </recommendedName>
    <alternativeName>
        <fullName evidence="1">Sulfur carrier protein ThiS sulfurtransferase</fullName>
    </alternativeName>
    <alternativeName>
        <fullName evidence="1">Thiamine biosynthesis protein ThiI</fullName>
    </alternativeName>
    <alternativeName>
        <fullName evidence="1">tRNA 4-thiouridine synthase</fullName>
    </alternativeName>
</protein>
<organism>
    <name type="scientific">Colwellia psychrerythraea (strain 34H / ATCC BAA-681)</name>
    <name type="common">Vibrio psychroerythus</name>
    <dbReference type="NCBI Taxonomy" id="167879"/>
    <lineage>
        <taxon>Bacteria</taxon>
        <taxon>Pseudomonadati</taxon>
        <taxon>Pseudomonadota</taxon>
        <taxon>Gammaproteobacteria</taxon>
        <taxon>Alteromonadales</taxon>
        <taxon>Colwelliaceae</taxon>
        <taxon>Colwellia</taxon>
    </lineage>
</organism>
<evidence type="ECO:0000255" key="1">
    <source>
        <dbReference type="HAMAP-Rule" id="MF_00021"/>
    </source>
</evidence>
<gene>
    <name evidence="1" type="primary">thiI</name>
    <name type="ordered locus">CPS_1094</name>
</gene>
<feature type="chain" id="PRO_1000074218" description="tRNA sulfurtransferase">
    <location>
        <begin position="1"/>
        <end position="484"/>
    </location>
</feature>
<feature type="domain" description="THUMP" evidence="1">
    <location>
        <begin position="63"/>
        <end position="167"/>
    </location>
</feature>
<feature type="domain" description="Rhodanese" evidence="1">
    <location>
        <begin position="406"/>
        <end position="484"/>
    </location>
</feature>
<feature type="active site" description="Cysteine persulfide intermediate" evidence="1">
    <location>
        <position position="458"/>
    </location>
</feature>
<feature type="binding site" evidence="1">
    <location>
        <begin position="185"/>
        <end position="186"/>
    </location>
    <ligand>
        <name>ATP</name>
        <dbReference type="ChEBI" id="CHEBI:30616"/>
    </ligand>
</feature>
<feature type="binding site" evidence="1">
    <location>
        <position position="267"/>
    </location>
    <ligand>
        <name>ATP</name>
        <dbReference type="ChEBI" id="CHEBI:30616"/>
    </ligand>
</feature>
<feature type="binding site" evidence="1">
    <location>
        <position position="289"/>
    </location>
    <ligand>
        <name>ATP</name>
        <dbReference type="ChEBI" id="CHEBI:30616"/>
    </ligand>
</feature>
<feature type="binding site" evidence="1">
    <location>
        <position position="298"/>
    </location>
    <ligand>
        <name>ATP</name>
        <dbReference type="ChEBI" id="CHEBI:30616"/>
    </ligand>
</feature>
<feature type="disulfide bond" description="Redox-active" evidence="1">
    <location>
        <begin position="346"/>
        <end position="458"/>
    </location>
</feature>
<reference key="1">
    <citation type="journal article" date="2005" name="Proc. Natl. Acad. Sci. U.S.A.">
        <title>The psychrophilic lifestyle as revealed by the genome sequence of Colwellia psychrerythraea 34H through genomic and proteomic analyses.</title>
        <authorList>
            <person name="Methe B.A."/>
            <person name="Nelson K.E."/>
            <person name="Deming J.W."/>
            <person name="Momen B."/>
            <person name="Melamud E."/>
            <person name="Zhang X."/>
            <person name="Moult J."/>
            <person name="Madupu R."/>
            <person name="Nelson W.C."/>
            <person name="Dodson R.J."/>
            <person name="Brinkac L.M."/>
            <person name="Daugherty S.C."/>
            <person name="Durkin A.S."/>
            <person name="DeBoy R.T."/>
            <person name="Kolonay J.F."/>
            <person name="Sullivan S.A."/>
            <person name="Zhou L."/>
            <person name="Davidsen T.M."/>
            <person name="Wu M."/>
            <person name="Huston A.L."/>
            <person name="Lewis M."/>
            <person name="Weaver B."/>
            <person name="Weidman J.F."/>
            <person name="Khouri H."/>
            <person name="Utterback T.R."/>
            <person name="Feldblyum T.V."/>
            <person name="Fraser C.M."/>
        </authorList>
    </citation>
    <scope>NUCLEOTIDE SEQUENCE [LARGE SCALE GENOMIC DNA]</scope>
    <source>
        <strain>34H / ATCC BAA-681</strain>
    </source>
</reference>
<proteinExistence type="inferred from homology"/>
<keyword id="KW-0067">ATP-binding</keyword>
<keyword id="KW-0963">Cytoplasm</keyword>
<keyword id="KW-1015">Disulfide bond</keyword>
<keyword id="KW-0547">Nucleotide-binding</keyword>
<keyword id="KW-0676">Redox-active center</keyword>
<keyword id="KW-0694">RNA-binding</keyword>
<keyword id="KW-0784">Thiamine biosynthesis</keyword>
<keyword id="KW-0808">Transferase</keyword>
<keyword id="KW-0820">tRNA-binding</keyword>
<dbReference type="EC" id="2.8.1.4" evidence="1"/>
<dbReference type="EMBL" id="CP000083">
    <property type="protein sequence ID" value="AAZ26485.1"/>
    <property type="molecule type" value="Genomic_DNA"/>
</dbReference>
<dbReference type="RefSeq" id="WP_011041932.1">
    <property type="nucleotide sequence ID" value="NC_003910.7"/>
</dbReference>
<dbReference type="SMR" id="Q487C7"/>
<dbReference type="STRING" id="167879.CPS_1094"/>
<dbReference type="KEGG" id="cps:CPS_1094"/>
<dbReference type="eggNOG" id="COG0301">
    <property type="taxonomic scope" value="Bacteria"/>
</dbReference>
<dbReference type="eggNOG" id="COG0607">
    <property type="taxonomic scope" value="Bacteria"/>
</dbReference>
<dbReference type="HOGENOM" id="CLU_037952_4_1_6"/>
<dbReference type="UniPathway" id="UPA00060"/>
<dbReference type="Proteomes" id="UP000000547">
    <property type="component" value="Chromosome"/>
</dbReference>
<dbReference type="GO" id="GO:0005829">
    <property type="term" value="C:cytosol"/>
    <property type="evidence" value="ECO:0007669"/>
    <property type="project" value="TreeGrafter"/>
</dbReference>
<dbReference type="GO" id="GO:0005524">
    <property type="term" value="F:ATP binding"/>
    <property type="evidence" value="ECO:0007669"/>
    <property type="project" value="UniProtKB-UniRule"/>
</dbReference>
<dbReference type="GO" id="GO:0004810">
    <property type="term" value="F:CCA tRNA nucleotidyltransferase activity"/>
    <property type="evidence" value="ECO:0007669"/>
    <property type="project" value="InterPro"/>
</dbReference>
<dbReference type="GO" id="GO:0000049">
    <property type="term" value="F:tRNA binding"/>
    <property type="evidence" value="ECO:0007669"/>
    <property type="project" value="UniProtKB-UniRule"/>
</dbReference>
<dbReference type="GO" id="GO:0140741">
    <property type="term" value="F:tRNA-uracil-4 sulfurtransferase activity"/>
    <property type="evidence" value="ECO:0007669"/>
    <property type="project" value="UniProtKB-EC"/>
</dbReference>
<dbReference type="GO" id="GO:0009228">
    <property type="term" value="P:thiamine biosynthetic process"/>
    <property type="evidence" value="ECO:0007669"/>
    <property type="project" value="UniProtKB-KW"/>
</dbReference>
<dbReference type="GO" id="GO:0009229">
    <property type="term" value="P:thiamine diphosphate biosynthetic process"/>
    <property type="evidence" value="ECO:0007669"/>
    <property type="project" value="UniProtKB-UniRule"/>
</dbReference>
<dbReference type="GO" id="GO:0052837">
    <property type="term" value="P:thiazole biosynthetic process"/>
    <property type="evidence" value="ECO:0007669"/>
    <property type="project" value="InterPro"/>
</dbReference>
<dbReference type="GO" id="GO:0002937">
    <property type="term" value="P:tRNA 4-thiouridine biosynthesis"/>
    <property type="evidence" value="ECO:0007669"/>
    <property type="project" value="TreeGrafter"/>
</dbReference>
<dbReference type="CDD" id="cd01712">
    <property type="entry name" value="PPase_ThiI"/>
    <property type="match status" value="1"/>
</dbReference>
<dbReference type="CDD" id="cd00158">
    <property type="entry name" value="RHOD"/>
    <property type="match status" value="1"/>
</dbReference>
<dbReference type="CDD" id="cd11716">
    <property type="entry name" value="THUMP_ThiI"/>
    <property type="match status" value="1"/>
</dbReference>
<dbReference type="FunFam" id="3.40.50.620:FF:000029">
    <property type="entry name" value="tRNA sulfurtransferase"/>
    <property type="match status" value="1"/>
</dbReference>
<dbReference type="Gene3D" id="3.30.2130.30">
    <property type="match status" value="1"/>
</dbReference>
<dbReference type="Gene3D" id="3.40.50.620">
    <property type="entry name" value="HUPs"/>
    <property type="match status" value="1"/>
</dbReference>
<dbReference type="Gene3D" id="3.40.250.10">
    <property type="entry name" value="Rhodanese-like domain"/>
    <property type="match status" value="1"/>
</dbReference>
<dbReference type="HAMAP" id="MF_00021">
    <property type="entry name" value="ThiI"/>
    <property type="match status" value="1"/>
</dbReference>
<dbReference type="InterPro" id="IPR001763">
    <property type="entry name" value="Rhodanese-like_dom"/>
</dbReference>
<dbReference type="InterPro" id="IPR036873">
    <property type="entry name" value="Rhodanese-like_dom_sf"/>
</dbReference>
<dbReference type="InterPro" id="IPR014729">
    <property type="entry name" value="Rossmann-like_a/b/a_fold"/>
</dbReference>
<dbReference type="InterPro" id="IPR020536">
    <property type="entry name" value="ThiI_AANH"/>
</dbReference>
<dbReference type="InterPro" id="IPR054173">
    <property type="entry name" value="ThiI_fer"/>
</dbReference>
<dbReference type="InterPro" id="IPR049961">
    <property type="entry name" value="ThiI_N"/>
</dbReference>
<dbReference type="InterPro" id="IPR026340">
    <property type="entry name" value="THII_Thiazole_biosynth_dom"/>
</dbReference>
<dbReference type="InterPro" id="IPR004114">
    <property type="entry name" value="THUMP_dom"/>
</dbReference>
<dbReference type="InterPro" id="IPR049962">
    <property type="entry name" value="THUMP_ThiI"/>
</dbReference>
<dbReference type="InterPro" id="IPR003720">
    <property type="entry name" value="tRNA_STrfase"/>
</dbReference>
<dbReference type="InterPro" id="IPR050102">
    <property type="entry name" value="tRNA_sulfurtransferase_ThiI"/>
</dbReference>
<dbReference type="NCBIfam" id="TIGR04271">
    <property type="entry name" value="ThiI_C_thiazole"/>
    <property type="match status" value="1"/>
</dbReference>
<dbReference type="NCBIfam" id="TIGR00342">
    <property type="entry name" value="tRNA uracil 4-sulfurtransferase ThiI"/>
    <property type="match status" value="1"/>
</dbReference>
<dbReference type="PANTHER" id="PTHR43209">
    <property type="entry name" value="TRNA SULFURTRANSFERASE"/>
    <property type="match status" value="1"/>
</dbReference>
<dbReference type="PANTHER" id="PTHR43209:SF1">
    <property type="entry name" value="TRNA SULFURTRANSFERASE"/>
    <property type="match status" value="1"/>
</dbReference>
<dbReference type="Pfam" id="PF02568">
    <property type="entry name" value="ThiI"/>
    <property type="match status" value="1"/>
</dbReference>
<dbReference type="Pfam" id="PF22025">
    <property type="entry name" value="ThiI_fer"/>
    <property type="match status" value="1"/>
</dbReference>
<dbReference type="Pfam" id="PF02926">
    <property type="entry name" value="THUMP"/>
    <property type="match status" value="1"/>
</dbReference>
<dbReference type="SMART" id="SM00981">
    <property type="entry name" value="THUMP"/>
    <property type="match status" value="1"/>
</dbReference>
<dbReference type="SUPFAM" id="SSF52402">
    <property type="entry name" value="Adenine nucleotide alpha hydrolases-like"/>
    <property type="match status" value="1"/>
</dbReference>
<dbReference type="SUPFAM" id="SSF52821">
    <property type="entry name" value="Rhodanese/Cell cycle control phosphatase"/>
    <property type="match status" value="1"/>
</dbReference>
<dbReference type="SUPFAM" id="SSF143437">
    <property type="entry name" value="THUMP domain-like"/>
    <property type="match status" value="1"/>
</dbReference>
<dbReference type="PROSITE" id="PS50206">
    <property type="entry name" value="RHODANESE_3"/>
    <property type="match status" value="1"/>
</dbReference>
<dbReference type="PROSITE" id="PS51165">
    <property type="entry name" value="THUMP"/>
    <property type="match status" value="1"/>
</dbReference>